<gene>
    <name type="ordered locus">SA2153</name>
</gene>
<organism>
    <name type="scientific">Staphylococcus aureus (strain N315)</name>
    <dbReference type="NCBI Taxonomy" id="158879"/>
    <lineage>
        <taxon>Bacteria</taxon>
        <taxon>Bacillati</taxon>
        <taxon>Bacillota</taxon>
        <taxon>Bacilli</taxon>
        <taxon>Bacillales</taxon>
        <taxon>Staphylococcaceae</taxon>
        <taxon>Staphylococcus</taxon>
    </lineage>
</organism>
<comment type="subcellular location">
    <subcellularLocation>
        <location evidence="2">Cytoplasm</location>
    </subcellularLocation>
</comment>
<feature type="chain" id="PRO_0000298606" description="Uncharacterized HTH-type transcriptional regulator SA2153">
    <location>
        <begin position="1"/>
        <end position="147"/>
    </location>
</feature>
<feature type="domain" description="HTH LytTR-type" evidence="1">
    <location>
        <begin position="44"/>
        <end position="147"/>
    </location>
</feature>
<protein>
    <recommendedName>
        <fullName>Uncharacterized HTH-type transcriptional regulator SA2153</fullName>
    </recommendedName>
</protein>
<reference key="1">
    <citation type="journal article" date="2001" name="Lancet">
        <title>Whole genome sequencing of meticillin-resistant Staphylococcus aureus.</title>
        <authorList>
            <person name="Kuroda M."/>
            <person name="Ohta T."/>
            <person name="Uchiyama I."/>
            <person name="Baba T."/>
            <person name="Yuzawa H."/>
            <person name="Kobayashi I."/>
            <person name="Cui L."/>
            <person name="Oguchi A."/>
            <person name="Aoki K."/>
            <person name="Nagai Y."/>
            <person name="Lian J.-Q."/>
            <person name="Ito T."/>
            <person name="Kanamori M."/>
            <person name="Matsumaru H."/>
            <person name="Maruyama A."/>
            <person name="Murakami H."/>
            <person name="Hosoyama A."/>
            <person name="Mizutani-Ui Y."/>
            <person name="Takahashi N.K."/>
            <person name="Sawano T."/>
            <person name="Inoue R."/>
            <person name="Kaito C."/>
            <person name="Sekimizu K."/>
            <person name="Hirakawa H."/>
            <person name="Kuhara S."/>
            <person name="Goto S."/>
            <person name="Yabuzaki J."/>
            <person name="Kanehisa M."/>
            <person name="Yamashita A."/>
            <person name="Oshima K."/>
            <person name="Furuya K."/>
            <person name="Yoshino C."/>
            <person name="Shiba T."/>
            <person name="Hattori M."/>
            <person name="Ogasawara N."/>
            <person name="Hayashi H."/>
            <person name="Hiramatsu K."/>
        </authorList>
    </citation>
    <scope>NUCLEOTIDE SEQUENCE [LARGE SCALE GENOMIC DNA]</scope>
    <source>
        <strain>N315</strain>
    </source>
</reference>
<accession>Q7A3W9</accession>
<dbReference type="EMBL" id="BA000018">
    <property type="protein sequence ID" value="BAB43455.1"/>
    <property type="molecule type" value="Genomic_DNA"/>
</dbReference>
<dbReference type="PIR" id="F90036">
    <property type="entry name" value="F90036"/>
</dbReference>
<dbReference type="RefSeq" id="WP_000977032.1">
    <property type="nucleotide sequence ID" value="NC_002745.2"/>
</dbReference>
<dbReference type="SMR" id="Q7A3W9"/>
<dbReference type="EnsemblBacteria" id="BAB43455">
    <property type="protein sequence ID" value="BAB43455"/>
    <property type="gene ID" value="BAB43455"/>
</dbReference>
<dbReference type="KEGG" id="sau:SA2153"/>
<dbReference type="HOGENOM" id="CLU_106729_4_0_9"/>
<dbReference type="GO" id="GO:0005737">
    <property type="term" value="C:cytoplasm"/>
    <property type="evidence" value="ECO:0007669"/>
    <property type="project" value="UniProtKB-SubCell"/>
</dbReference>
<dbReference type="GO" id="GO:0003677">
    <property type="term" value="F:DNA binding"/>
    <property type="evidence" value="ECO:0007669"/>
    <property type="project" value="UniProtKB-KW"/>
</dbReference>
<dbReference type="GO" id="GO:0000156">
    <property type="term" value="F:phosphorelay response regulator activity"/>
    <property type="evidence" value="ECO:0007669"/>
    <property type="project" value="InterPro"/>
</dbReference>
<dbReference type="Gene3D" id="2.40.50.1020">
    <property type="entry name" value="LytTr DNA-binding domain"/>
    <property type="match status" value="1"/>
</dbReference>
<dbReference type="InterPro" id="IPR046947">
    <property type="entry name" value="LytR-like"/>
</dbReference>
<dbReference type="InterPro" id="IPR007492">
    <property type="entry name" value="LytTR_DNA-bd_dom"/>
</dbReference>
<dbReference type="PANTHER" id="PTHR37299:SF2">
    <property type="entry name" value="HTH LYTTR-TYPE DOMAIN-CONTAINING PROTEIN"/>
    <property type="match status" value="1"/>
</dbReference>
<dbReference type="PANTHER" id="PTHR37299">
    <property type="entry name" value="TRANSCRIPTIONAL REGULATOR-RELATED"/>
    <property type="match status" value="1"/>
</dbReference>
<dbReference type="Pfam" id="PF04397">
    <property type="entry name" value="LytTR"/>
    <property type="match status" value="1"/>
</dbReference>
<dbReference type="SMART" id="SM00850">
    <property type="entry name" value="LytTR"/>
    <property type="match status" value="1"/>
</dbReference>
<dbReference type="PROSITE" id="PS50930">
    <property type="entry name" value="HTH_LYTTR"/>
    <property type="match status" value="1"/>
</dbReference>
<keyword id="KW-0963">Cytoplasm</keyword>
<keyword id="KW-0238">DNA-binding</keyword>
<keyword id="KW-0804">Transcription</keyword>
<keyword id="KW-0805">Transcription regulation</keyword>
<proteinExistence type="predicted"/>
<name>Y2153_STAAN</name>
<sequence>MMKLNLFINANETESYIDIHAPKMNDHVQSIINAVNDLDKSHTLVGYIDKEIHIINVSDVITFQVINKNVTAITSNQKFKLKLRLYELEKQLPQHFIRISKSEIVNKYYIEKLLLEPNGLIRMYLKDAHYTYSSRRYLKSIKERLSI</sequence>
<evidence type="ECO:0000255" key="1">
    <source>
        <dbReference type="PROSITE-ProRule" id="PRU00112"/>
    </source>
</evidence>
<evidence type="ECO:0000305" key="2"/>